<dbReference type="EMBL" id="CP000687">
    <property type="protein sequence ID" value="ABY69727.1"/>
    <property type="molecule type" value="Genomic_DNA"/>
</dbReference>
<dbReference type="RefSeq" id="WP_005598055.1">
    <property type="nucleotide sequence ID" value="NC_010278.1"/>
</dbReference>
<dbReference type="SMR" id="B0BQ92"/>
<dbReference type="KEGG" id="apj:APJL_1171"/>
<dbReference type="HOGENOM" id="CLU_062974_2_2_6"/>
<dbReference type="Proteomes" id="UP000008547">
    <property type="component" value="Chromosome"/>
</dbReference>
<dbReference type="GO" id="GO:0005829">
    <property type="term" value="C:cytosol"/>
    <property type="evidence" value="ECO:0007669"/>
    <property type="project" value="TreeGrafter"/>
</dbReference>
<dbReference type="GO" id="GO:0003677">
    <property type="term" value="F:DNA binding"/>
    <property type="evidence" value="ECO:0007669"/>
    <property type="project" value="UniProtKB-UniRule"/>
</dbReference>
<dbReference type="GO" id="GO:0006355">
    <property type="term" value="P:regulation of DNA-templated transcription"/>
    <property type="evidence" value="ECO:0007669"/>
    <property type="project" value="UniProtKB-UniRule"/>
</dbReference>
<dbReference type="FunFam" id="1.10.10.200:FF:000001">
    <property type="entry name" value="Probable transcriptional regulatory protein YebC"/>
    <property type="match status" value="1"/>
</dbReference>
<dbReference type="FunFam" id="3.30.70.980:FF:000002">
    <property type="entry name" value="Probable transcriptional regulatory protein YebC"/>
    <property type="match status" value="1"/>
</dbReference>
<dbReference type="Gene3D" id="1.10.10.200">
    <property type="match status" value="1"/>
</dbReference>
<dbReference type="Gene3D" id="3.30.70.980">
    <property type="match status" value="2"/>
</dbReference>
<dbReference type="HAMAP" id="MF_00693">
    <property type="entry name" value="Transcrip_reg_TACO1"/>
    <property type="match status" value="1"/>
</dbReference>
<dbReference type="InterPro" id="IPR017856">
    <property type="entry name" value="Integrase-like_N"/>
</dbReference>
<dbReference type="InterPro" id="IPR048300">
    <property type="entry name" value="TACO1_YebC-like_2nd/3rd_dom"/>
</dbReference>
<dbReference type="InterPro" id="IPR049083">
    <property type="entry name" value="TACO1_YebC_N"/>
</dbReference>
<dbReference type="InterPro" id="IPR002876">
    <property type="entry name" value="Transcrip_reg_TACO1-like"/>
</dbReference>
<dbReference type="InterPro" id="IPR026564">
    <property type="entry name" value="Transcrip_reg_TACO1-like_dom3"/>
</dbReference>
<dbReference type="InterPro" id="IPR029072">
    <property type="entry name" value="YebC-like"/>
</dbReference>
<dbReference type="NCBIfam" id="NF001030">
    <property type="entry name" value="PRK00110.1"/>
    <property type="match status" value="1"/>
</dbReference>
<dbReference type="NCBIfam" id="NF009044">
    <property type="entry name" value="PRK12378.1"/>
    <property type="match status" value="1"/>
</dbReference>
<dbReference type="NCBIfam" id="TIGR01033">
    <property type="entry name" value="YebC/PmpR family DNA-binding transcriptional regulator"/>
    <property type="match status" value="1"/>
</dbReference>
<dbReference type="PANTHER" id="PTHR12532:SF6">
    <property type="entry name" value="TRANSCRIPTIONAL REGULATORY PROTEIN YEBC-RELATED"/>
    <property type="match status" value="1"/>
</dbReference>
<dbReference type="PANTHER" id="PTHR12532">
    <property type="entry name" value="TRANSLATIONAL ACTIVATOR OF CYTOCHROME C OXIDASE 1"/>
    <property type="match status" value="1"/>
</dbReference>
<dbReference type="Pfam" id="PF20772">
    <property type="entry name" value="TACO1_YebC_N"/>
    <property type="match status" value="1"/>
</dbReference>
<dbReference type="Pfam" id="PF01709">
    <property type="entry name" value="Transcrip_reg"/>
    <property type="match status" value="1"/>
</dbReference>
<dbReference type="SUPFAM" id="SSF75625">
    <property type="entry name" value="YebC-like"/>
    <property type="match status" value="1"/>
</dbReference>
<keyword id="KW-0963">Cytoplasm</keyword>
<keyword id="KW-0238">DNA-binding</keyword>
<keyword id="KW-0804">Transcription</keyword>
<keyword id="KW-0805">Transcription regulation</keyword>
<comment type="subcellular location">
    <subcellularLocation>
        <location evidence="1">Cytoplasm</location>
    </subcellularLocation>
</comment>
<comment type="similarity">
    <text evidence="1">Belongs to the TACO1 family.</text>
</comment>
<evidence type="ECO:0000255" key="1">
    <source>
        <dbReference type="HAMAP-Rule" id="MF_00693"/>
    </source>
</evidence>
<feature type="chain" id="PRO_1000132144" description="Probable transcriptional regulatory protein APJL_1171">
    <location>
        <begin position="1"/>
        <end position="246"/>
    </location>
</feature>
<accession>B0BQ92</accession>
<name>Y1171_ACTPJ</name>
<proteinExistence type="inferred from homology"/>
<sequence>MAGHSKWANIKHRKAAQDAQRGKIFTKLIRELVTAAKIGGGDVSANPRLRSAVDKALSNNMTRDTINRAIERGVGGGDDTNMETKIYEGYGPGGTAVMVECLSDNANRTISQVRPSFTKCGGNLGTEGSVGYLFSKKGLILIASGDEDALTEAAIEAGADDIQPQEDGSFEVYTAWEDLGSVRDGIEAAGFKIQEAEVTMIPSTTVELDAETAPKLLDLINRLEDCDDVQNVYHNGEISDEVAALL</sequence>
<protein>
    <recommendedName>
        <fullName evidence="1">Probable transcriptional regulatory protein APJL_1171</fullName>
    </recommendedName>
</protein>
<gene>
    <name type="ordered locus">APJL_1171</name>
</gene>
<organism>
    <name type="scientific">Actinobacillus pleuropneumoniae serotype 3 (strain JL03)</name>
    <dbReference type="NCBI Taxonomy" id="434271"/>
    <lineage>
        <taxon>Bacteria</taxon>
        <taxon>Pseudomonadati</taxon>
        <taxon>Pseudomonadota</taxon>
        <taxon>Gammaproteobacteria</taxon>
        <taxon>Pasteurellales</taxon>
        <taxon>Pasteurellaceae</taxon>
        <taxon>Actinobacillus</taxon>
    </lineage>
</organism>
<reference key="1">
    <citation type="journal article" date="2008" name="PLoS ONE">
        <title>Genome biology of Actinobacillus pleuropneumoniae JL03, an isolate of serotype 3 prevalent in China.</title>
        <authorList>
            <person name="Xu Z."/>
            <person name="Zhou Y."/>
            <person name="Li L."/>
            <person name="Zhou R."/>
            <person name="Xiao S."/>
            <person name="Wan Y."/>
            <person name="Zhang S."/>
            <person name="Wang K."/>
            <person name="Li W."/>
            <person name="Li L."/>
            <person name="Jin H."/>
            <person name="Kang M."/>
            <person name="Dalai B."/>
            <person name="Li T."/>
            <person name="Liu L."/>
            <person name="Cheng Y."/>
            <person name="Zhang L."/>
            <person name="Xu T."/>
            <person name="Zheng H."/>
            <person name="Pu S."/>
            <person name="Wang B."/>
            <person name="Gu W."/>
            <person name="Zhang X.L."/>
            <person name="Zhu G.-F."/>
            <person name="Wang S."/>
            <person name="Zhao G.-P."/>
            <person name="Chen H."/>
        </authorList>
    </citation>
    <scope>NUCLEOTIDE SEQUENCE [LARGE SCALE GENOMIC DNA]</scope>
    <source>
        <strain>JL03</strain>
    </source>
</reference>